<proteinExistence type="inferred from homology"/>
<name>PURE_METSM</name>
<evidence type="ECO:0000255" key="1">
    <source>
        <dbReference type="HAMAP-Rule" id="MF_01929"/>
    </source>
</evidence>
<evidence type="ECO:0000305" key="2"/>
<keyword id="KW-0413">Isomerase</keyword>
<keyword id="KW-0658">Purine biosynthesis</keyword>
<gene>
    <name evidence="1" type="primary">purE</name>
</gene>
<dbReference type="EC" id="5.4.99.18" evidence="1"/>
<dbReference type="EMBL" id="X02586">
    <property type="protein sequence ID" value="CAA26422.1"/>
    <property type="molecule type" value="Genomic_DNA"/>
</dbReference>
<dbReference type="PIR" id="S28656">
    <property type="entry name" value="S28656"/>
</dbReference>
<dbReference type="SMR" id="P22348"/>
<dbReference type="UniPathway" id="UPA00074">
    <property type="reaction ID" value="UER00943"/>
</dbReference>
<dbReference type="GO" id="GO:0034023">
    <property type="term" value="F:5-(carboxyamino)imidazole ribonucleotide mutase activity"/>
    <property type="evidence" value="ECO:0007669"/>
    <property type="project" value="UniProtKB-UniRule"/>
</dbReference>
<dbReference type="GO" id="GO:0006189">
    <property type="term" value="P:'de novo' IMP biosynthetic process"/>
    <property type="evidence" value="ECO:0007669"/>
    <property type="project" value="UniProtKB-UniRule"/>
</dbReference>
<dbReference type="Gene3D" id="3.40.50.1970">
    <property type="match status" value="2"/>
</dbReference>
<dbReference type="HAMAP" id="MF_01929">
    <property type="entry name" value="PurE_classI"/>
    <property type="match status" value="1"/>
</dbReference>
<dbReference type="InterPro" id="IPR033747">
    <property type="entry name" value="PurE_ClassI"/>
</dbReference>
<dbReference type="InterPro" id="IPR000031">
    <property type="entry name" value="PurE_dom"/>
</dbReference>
<dbReference type="InterPro" id="IPR024694">
    <property type="entry name" value="PurE_prokaryotes"/>
</dbReference>
<dbReference type="NCBIfam" id="TIGR01162">
    <property type="entry name" value="purE"/>
    <property type="match status" value="1"/>
</dbReference>
<dbReference type="PANTHER" id="PTHR23046:SF2">
    <property type="entry name" value="PHOSPHORIBOSYLAMINOIMIDAZOLE CARBOXYLASE"/>
    <property type="match status" value="1"/>
</dbReference>
<dbReference type="PANTHER" id="PTHR23046">
    <property type="entry name" value="PHOSPHORIBOSYLAMINOIMIDAZOLE CARBOXYLASE CATALYTIC SUBUNIT"/>
    <property type="match status" value="1"/>
</dbReference>
<dbReference type="Pfam" id="PF00731">
    <property type="entry name" value="AIRC"/>
    <property type="match status" value="2"/>
</dbReference>
<dbReference type="SMART" id="SM01001">
    <property type="entry name" value="AIRC"/>
    <property type="match status" value="2"/>
</dbReference>
<dbReference type="SUPFAM" id="SSF52255">
    <property type="entry name" value="N5-CAIR mutase (phosphoribosylaminoimidazole carboxylase, PurE)"/>
    <property type="match status" value="2"/>
</dbReference>
<feature type="chain" id="PRO_0000074991" description="Probable N5-carboxyaminoimidazole ribonucleotide mutase">
    <location>
        <begin position="1"/>
        <end position="339"/>
    </location>
</feature>
<feature type="binding site" evidence="1">
    <location>
        <position position="11"/>
    </location>
    <ligand>
        <name>substrate</name>
    </ligand>
</feature>
<feature type="binding site" evidence="1">
    <location>
        <position position="14"/>
    </location>
    <ligand>
        <name>substrate</name>
    </ligand>
</feature>
<feature type="binding site" evidence="1">
    <location>
        <position position="41"/>
    </location>
    <ligand>
        <name>substrate</name>
    </ligand>
</feature>
<accession>P22348</accession>
<organism>
    <name type="scientific">Methanobrevibacter smithii</name>
    <dbReference type="NCBI Taxonomy" id="2173"/>
    <lineage>
        <taxon>Archaea</taxon>
        <taxon>Methanobacteriati</taxon>
        <taxon>Methanobacteriota</taxon>
        <taxon>Methanomada group</taxon>
        <taxon>Methanobacteria</taxon>
        <taxon>Methanobacteriales</taxon>
        <taxon>Methanobacteriaceae</taxon>
        <taxon>Methanobrevibacter</taxon>
    </lineage>
</organism>
<protein>
    <recommendedName>
        <fullName evidence="2">Probable N5-carboxyaminoimidazole ribonucleotide mutase</fullName>
        <shortName evidence="1">N5-CAIR mutase</shortName>
        <ecNumber evidence="1">5.4.99.18</ecNumber>
    </recommendedName>
    <alternativeName>
        <fullName evidence="1">5-(carboxyamino)imidazole ribonucleotide mutase</fullName>
    </alternativeName>
</protein>
<sequence>MTPKVMIILGSGSDIAIAEKSMKILEKLEIPYSLKIASAHRTPDLVRELVVQGTNAGIKVFIGIAGLAAHLPGAIAAYTHKPVIGVPVDVKVSGLDALYSSVQMPYPSPVATVGIDRGDNGAILAARILGLYDEEIRKKVLESKEGYRQKVIKNNEEIVQKIDNPHITNDFLRIKNLELNETTEEFNGSYINKNAEVVIIVGRHTDLITGKKVSVTLDRLKIPHDMQVICPIRSGKKFRAYVNTMKNAKIFIGINSNSSQVSGGLVGLTEKPVIGVPCENELGNNYLLSTVNMPPGVPVATVGVNNGRNAAVLSGEILSINNPVLLELLEKLKNKKINI</sequence>
<reference key="1">
    <citation type="journal article" date="1985" name="Mol. Gen. Genet.">
        <title>Structure of genes and an insertion element in the methane producing archaebacterium Methanobrevibacter smithii.</title>
        <authorList>
            <person name="Hamilton P.T."/>
            <person name="Reeve J.N."/>
        </authorList>
    </citation>
    <scope>NUCLEOTIDE SEQUENCE [GENOMIC DNA]</scope>
</reference>
<comment type="function">
    <text evidence="1">Catalyzes the conversion of N5-carboxyaminoimidazole ribonucleotide (N5-CAIR) to 4-carboxy-5-aminoimidazole ribonucleotide (CAIR).</text>
</comment>
<comment type="catalytic activity">
    <reaction evidence="1">
        <text>5-carboxyamino-1-(5-phospho-D-ribosyl)imidazole + H(+) = 5-amino-1-(5-phospho-D-ribosyl)imidazole-4-carboxylate</text>
        <dbReference type="Rhea" id="RHEA:13193"/>
        <dbReference type="ChEBI" id="CHEBI:15378"/>
        <dbReference type="ChEBI" id="CHEBI:58730"/>
        <dbReference type="ChEBI" id="CHEBI:77657"/>
        <dbReference type="EC" id="5.4.99.18"/>
    </reaction>
</comment>
<comment type="pathway">
    <text evidence="1">Purine metabolism; IMP biosynthesis via de novo pathway; 5-amino-1-(5-phospho-D-ribosyl)imidazole-4-carboxylate from 5-amino-1-(5-phospho-D-ribosyl)imidazole (N5-CAIR route): step 2/2.</text>
</comment>
<comment type="similarity">
    <text evidence="1">Belongs to the AIR carboxylase family. Class I subfamily.</text>
</comment>